<evidence type="ECO:0000250" key="1"/>
<evidence type="ECO:0000255" key="2"/>
<evidence type="ECO:0000269" key="3">
    <source>
    </source>
</evidence>
<evidence type="ECO:0000269" key="4">
    <source>
    </source>
</evidence>
<evidence type="ECO:0000269" key="5">
    <source>
    </source>
</evidence>
<evidence type="ECO:0000269" key="6">
    <source>
    </source>
</evidence>
<evidence type="ECO:0000269" key="7">
    <source>
    </source>
</evidence>
<evidence type="ECO:0000269" key="8">
    <source>
    </source>
</evidence>
<evidence type="ECO:0000269" key="9">
    <source>
    </source>
</evidence>
<evidence type="ECO:0000269" key="10">
    <source>
    </source>
</evidence>
<evidence type="ECO:0000269" key="11">
    <source ref="5"/>
</evidence>
<evidence type="ECO:0000269" key="12">
    <source ref="7"/>
</evidence>
<evidence type="ECO:0000305" key="13"/>
<dbReference type="EC" id="3.2.1.35"/>
<dbReference type="EMBL" id="AJ000099">
    <property type="protein sequence ID" value="CAA03924.1"/>
    <property type="molecule type" value="mRNA"/>
</dbReference>
<dbReference type="EMBL" id="U09577">
    <property type="protein sequence ID" value="AAC62823.1"/>
    <property type="molecule type" value="mRNA"/>
</dbReference>
<dbReference type="EMBL" id="AK092449">
    <property type="protein sequence ID" value="BAG52554.1"/>
    <property type="molecule type" value="mRNA"/>
</dbReference>
<dbReference type="EMBL" id="AK127945">
    <property type="protein sequence ID" value="BAG54602.1"/>
    <property type="molecule type" value="mRNA"/>
</dbReference>
<dbReference type="EMBL" id="AC002455">
    <property type="protein sequence ID" value="AAB67045.1"/>
    <property type="molecule type" value="Genomic_DNA"/>
</dbReference>
<dbReference type="EMBL" id="CH471055">
    <property type="protein sequence ID" value="EAW65092.1"/>
    <property type="molecule type" value="Genomic_DNA"/>
</dbReference>
<dbReference type="EMBL" id="BC000692">
    <property type="protein sequence ID" value="AAH00692.1"/>
    <property type="molecule type" value="mRNA"/>
</dbReference>
<dbReference type="EMBL" id="AF070608">
    <property type="protein sequence ID" value="AAC28656.1"/>
    <property type="status" value="ALT_INIT"/>
    <property type="molecule type" value="mRNA"/>
</dbReference>
<dbReference type="CCDS" id="CCDS2818.1"/>
<dbReference type="RefSeq" id="NP_003764.3">
    <property type="nucleotide sequence ID" value="NM_003773.4"/>
</dbReference>
<dbReference type="RefSeq" id="NP_149348.2">
    <property type="nucleotide sequence ID" value="NM_033158.4"/>
</dbReference>
<dbReference type="RefSeq" id="XP_005265581.1">
    <property type="nucleotide sequence ID" value="XM_005265524.3"/>
</dbReference>
<dbReference type="RefSeq" id="XP_005265582.1">
    <property type="nucleotide sequence ID" value="XM_005265525.3"/>
</dbReference>
<dbReference type="SMR" id="Q12891"/>
<dbReference type="BioGRID" id="114239">
    <property type="interactions" value="163"/>
</dbReference>
<dbReference type="CORUM" id="Q12891"/>
<dbReference type="FunCoup" id="Q12891">
    <property type="interactions" value="627"/>
</dbReference>
<dbReference type="IntAct" id="Q12891">
    <property type="interactions" value="86"/>
</dbReference>
<dbReference type="STRING" id="9606.ENSP00000401853"/>
<dbReference type="DrugBank" id="DB08818">
    <property type="generic name" value="Hyaluronic acid"/>
</dbReference>
<dbReference type="CAZy" id="GH56">
    <property type="family name" value="Glycoside Hydrolase Family 56"/>
</dbReference>
<dbReference type="GlyCosmos" id="Q12891">
    <property type="glycosylation" value="3 sites, No reported glycans"/>
</dbReference>
<dbReference type="GlyGen" id="Q12891">
    <property type="glycosylation" value="7 sites, 5 N-linked glycans (1 site), 2 O-linked glycans (3 sites)"/>
</dbReference>
<dbReference type="iPTMnet" id="Q12891"/>
<dbReference type="PhosphoSitePlus" id="Q12891"/>
<dbReference type="BioMuta" id="HYAL2"/>
<dbReference type="DMDM" id="311033483"/>
<dbReference type="jPOST" id="Q12891"/>
<dbReference type="MassIVE" id="Q12891"/>
<dbReference type="PaxDb" id="9606-ENSP00000401853"/>
<dbReference type="PeptideAtlas" id="Q12891"/>
<dbReference type="ProteomicsDB" id="59006"/>
<dbReference type="Antibodypedia" id="30889">
    <property type="antibodies" value="271 antibodies from 32 providers"/>
</dbReference>
<dbReference type="DNASU" id="8692"/>
<dbReference type="Ensembl" id="ENST00000357750.9">
    <property type="protein sequence ID" value="ENSP00000350387.4"/>
    <property type="gene ID" value="ENSG00000068001.14"/>
</dbReference>
<dbReference type="Ensembl" id="ENST00000395139.7">
    <property type="protein sequence ID" value="ENSP00000378571.3"/>
    <property type="gene ID" value="ENSG00000068001.14"/>
</dbReference>
<dbReference type="Ensembl" id="ENST00000442581.1">
    <property type="protein sequence ID" value="ENSP00000406657.1"/>
    <property type="gene ID" value="ENSG00000068001.14"/>
</dbReference>
<dbReference type="Ensembl" id="ENST00000447092.5">
    <property type="protein sequence ID" value="ENSP00000401853.1"/>
    <property type="gene ID" value="ENSG00000068001.14"/>
</dbReference>
<dbReference type="GeneID" id="8692"/>
<dbReference type="KEGG" id="hsa:8692"/>
<dbReference type="MANE-Select" id="ENST00000357750.9">
    <property type="protein sequence ID" value="ENSP00000350387.4"/>
    <property type="RefSeq nucleotide sequence ID" value="NM_003773.5"/>
    <property type="RefSeq protein sequence ID" value="NP_003764.3"/>
</dbReference>
<dbReference type="UCSC" id="uc003czv.4">
    <property type="organism name" value="human"/>
</dbReference>
<dbReference type="AGR" id="HGNC:5321"/>
<dbReference type="CTD" id="8692"/>
<dbReference type="DisGeNET" id="8692"/>
<dbReference type="GeneCards" id="HYAL2"/>
<dbReference type="GeneReviews" id="HYAL2"/>
<dbReference type="HGNC" id="HGNC:5321">
    <property type="gene designation" value="HYAL2"/>
</dbReference>
<dbReference type="HPA" id="ENSG00000068001">
    <property type="expression patterns" value="Tissue enhanced (lymphoid)"/>
</dbReference>
<dbReference type="MalaCards" id="HYAL2"/>
<dbReference type="MIM" id="603551">
    <property type="type" value="gene"/>
</dbReference>
<dbReference type="MIM" id="621063">
    <property type="type" value="phenotype"/>
</dbReference>
<dbReference type="neXtProt" id="NX_Q12891"/>
<dbReference type="OpenTargets" id="ENSG00000068001"/>
<dbReference type="Orphanet" id="508476">
    <property type="disease" value="Cleft lip and palate-craniofacial dysmorphism-congenital heart defect-hearing loss syndrome"/>
</dbReference>
<dbReference type="PharmGKB" id="PA29572"/>
<dbReference type="VEuPathDB" id="HostDB:ENSG00000068001"/>
<dbReference type="eggNOG" id="ENOG502QUYI">
    <property type="taxonomic scope" value="Eukaryota"/>
</dbReference>
<dbReference type="GeneTree" id="ENSGT01020000230364"/>
<dbReference type="HOGENOM" id="CLU_036366_0_0_1"/>
<dbReference type="InParanoid" id="Q12891"/>
<dbReference type="OMA" id="TKNRESC"/>
<dbReference type="OrthoDB" id="5796153at2759"/>
<dbReference type="PAN-GO" id="Q12891">
    <property type="GO annotations" value="3 GO annotations based on evolutionary models"/>
</dbReference>
<dbReference type="PhylomeDB" id="Q12891"/>
<dbReference type="TreeFam" id="TF321598"/>
<dbReference type="BioCyc" id="MetaCyc:HS00926-MONOMER"/>
<dbReference type="BRENDA" id="3.2.1.35">
    <property type="organism ID" value="2681"/>
</dbReference>
<dbReference type="BRENDA" id="4.2.2.1">
    <property type="organism ID" value="2681"/>
</dbReference>
<dbReference type="PathwayCommons" id="Q12891"/>
<dbReference type="Reactome" id="R-HSA-2160916">
    <property type="pathway name" value="Hyaluronan uptake and degradation"/>
</dbReference>
<dbReference type="SignaLink" id="Q12891"/>
<dbReference type="BioGRID-ORCS" id="8692">
    <property type="hits" value="10 hits in 1164 CRISPR screens"/>
</dbReference>
<dbReference type="ChiTaRS" id="HYAL2">
    <property type="organism name" value="human"/>
</dbReference>
<dbReference type="GeneWiki" id="HYAL2"/>
<dbReference type="GenomeRNAi" id="8692"/>
<dbReference type="Pharos" id="Q12891">
    <property type="development level" value="Tbio"/>
</dbReference>
<dbReference type="PRO" id="PR:Q12891"/>
<dbReference type="Proteomes" id="UP000005640">
    <property type="component" value="Chromosome 3"/>
</dbReference>
<dbReference type="RNAct" id="Q12891">
    <property type="molecule type" value="protein"/>
</dbReference>
<dbReference type="Bgee" id="ENSG00000068001">
    <property type="expression patterns" value="Expressed in right lung and 188 other cell types or tissues"/>
</dbReference>
<dbReference type="ExpressionAtlas" id="Q12891">
    <property type="expression patterns" value="baseline and differential"/>
</dbReference>
<dbReference type="GO" id="GO:0016324">
    <property type="term" value="C:apical plasma membrane"/>
    <property type="evidence" value="ECO:0000314"/>
    <property type="project" value="UniProtKB"/>
</dbReference>
<dbReference type="GO" id="GO:0009986">
    <property type="term" value="C:cell surface"/>
    <property type="evidence" value="ECO:0000314"/>
    <property type="project" value="UniProtKB"/>
</dbReference>
<dbReference type="GO" id="GO:0005737">
    <property type="term" value="C:cytoplasm"/>
    <property type="evidence" value="ECO:0000314"/>
    <property type="project" value="UniProtKB"/>
</dbReference>
<dbReference type="GO" id="GO:0031410">
    <property type="term" value="C:cytoplasmic vesicle"/>
    <property type="evidence" value="ECO:0000314"/>
    <property type="project" value="UniProtKB"/>
</dbReference>
<dbReference type="GO" id="GO:0005829">
    <property type="term" value="C:cytosol"/>
    <property type="evidence" value="ECO:0000314"/>
    <property type="project" value="BHF-UCL"/>
</dbReference>
<dbReference type="GO" id="GO:0030139">
    <property type="term" value="C:endocytic vesicle"/>
    <property type="evidence" value="ECO:0000314"/>
    <property type="project" value="BHF-UCL"/>
</dbReference>
<dbReference type="GO" id="GO:0005783">
    <property type="term" value="C:endoplasmic reticulum"/>
    <property type="evidence" value="ECO:0000303"/>
    <property type="project" value="UniProtKB"/>
</dbReference>
<dbReference type="GO" id="GO:0009897">
    <property type="term" value="C:external side of plasma membrane"/>
    <property type="evidence" value="ECO:0000314"/>
    <property type="project" value="UniProtKB"/>
</dbReference>
<dbReference type="GO" id="GO:0000139">
    <property type="term" value="C:Golgi membrane"/>
    <property type="evidence" value="ECO:0000250"/>
    <property type="project" value="UniProtKB"/>
</dbReference>
<dbReference type="GO" id="GO:0005764">
    <property type="term" value="C:lysosome"/>
    <property type="evidence" value="ECO:0000314"/>
    <property type="project" value="UniProtKB"/>
</dbReference>
<dbReference type="GO" id="GO:0045121">
    <property type="term" value="C:membrane raft"/>
    <property type="evidence" value="ECO:0000314"/>
    <property type="project" value="UniProtKB"/>
</dbReference>
<dbReference type="GO" id="GO:0005902">
    <property type="term" value="C:microvillus"/>
    <property type="evidence" value="ECO:0000314"/>
    <property type="project" value="BHF-UCL"/>
</dbReference>
<dbReference type="GO" id="GO:0048471">
    <property type="term" value="C:perinuclear region of cytoplasm"/>
    <property type="evidence" value="ECO:0000314"/>
    <property type="project" value="UniProtKB"/>
</dbReference>
<dbReference type="GO" id="GO:0005886">
    <property type="term" value="C:plasma membrane"/>
    <property type="evidence" value="ECO:0000314"/>
    <property type="project" value="UniProtKB"/>
</dbReference>
<dbReference type="GO" id="GO:0090575">
    <property type="term" value="C:RNA polymerase II transcription regulator complex"/>
    <property type="evidence" value="ECO:0000250"/>
    <property type="project" value="BHF-UCL"/>
</dbReference>
<dbReference type="GO" id="GO:0019899">
    <property type="term" value="F:enzyme binding"/>
    <property type="evidence" value="ECO:0000353"/>
    <property type="project" value="BHF-UCL"/>
</dbReference>
<dbReference type="GO" id="GO:0005540">
    <property type="term" value="F:hyaluronic acid binding"/>
    <property type="evidence" value="ECO:0000314"/>
    <property type="project" value="UniProtKB"/>
</dbReference>
<dbReference type="GO" id="GO:0033906">
    <property type="term" value="F:hyaluronoglucuronidase activity"/>
    <property type="evidence" value="ECO:0000314"/>
    <property type="project" value="UniProtKB"/>
</dbReference>
<dbReference type="GO" id="GO:0004415">
    <property type="term" value="F:hyalurononglucosaminidase activity"/>
    <property type="evidence" value="ECO:0000314"/>
    <property type="project" value="UniProtKB"/>
</dbReference>
<dbReference type="GO" id="GO:0030294">
    <property type="term" value="F:receptor signaling protein tyrosine kinase inhibitor activity"/>
    <property type="evidence" value="ECO:0000314"/>
    <property type="project" value="UniProtKB"/>
</dbReference>
<dbReference type="GO" id="GO:0030971">
    <property type="term" value="F:receptor tyrosine kinase binding"/>
    <property type="evidence" value="ECO:0000353"/>
    <property type="project" value="UniProtKB"/>
</dbReference>
<dbReference type="GO" id="GO:0003713">
    <property type="term" value="F:transcription coactivator activity"/>
    <property type="evidence" value="ECO:0007669"/>
    <property type="project" value="Ensembl"/>
</dbReference>
<dbReference type="GO" id="GO:0050431">
    <property type="term" value="F:transforming growth factor beta binding"/>
    <property type="evidence" value="ECO:0000250"/>
    <property type="project" value="BHF-UCL"/>
</dbReference>
<dbReference type="GO" id="GO:0001618">
    <property type="term" value="F:virus receptor activity"/>
    <property type="evidence" value="ECO:0000314"/>
    <property type="project" value="UniProtKB"/>
</dbReference>
<dbReference type="GO" id="GO:0005975">
    <property type="term" value="P:carbohydrate metabolic process"/>
    <property type="evidence" value="ECO:0007669"/>
    <property type="project" value="InterPro"/>
</dbReference>
<dbReference type="GO" id="GO:0051216">
    <property type="term" value="P:cartilage development"/>
    <property type="evidence" value="ECO:0000270"/>
    <property type="project" value="UniProtKB"/>
</dbReference>
<dbReference type="GO" id="GO:0044344">
    <property type="term" value="P:cellular response to fibroblast growth factor stimulus"/>
    <property type="evidence" value="ECO:0000314"/>
    <property type="project" value="UniProtKB"/>
</dbReference>
<dbReference type="GO" id="GO:0071347">
    <property type="term" value="P:cellular response to interleukin-1"/>
    <property type="evidence" value="ECO:0000314"/>
    <property type="project" value="UniProtKB"/>
</dbReference>
<dbReference type="GO" id="GO:0071560">
    <property type="term" value="P:cellular response to transforming growth factor beta stimulus"/>
    <property type="evidence" value="ECO:0000314"/>
    <property type="project" value="BHF-UCL"/>
</dbReference>
<dbReference type="GO" id="GO:0071356">
    <property type="term" value="P:cellular response to tumor necrosis factor"/>
    <property type="evidence" value="ECO:0000270"/>
    <property type="project" value="UniProtKB"/>
</dbReference>
<dbReference type="GO" id="GO:0071493">
    <property type="term" value="P:cellular response to UV-B"/>
    <property type="evidence" value="ECO:0000314"/>
    <property type="project" value="UniProtKB"/>
</dbReference>
<dbReference type="GO" id="GO:0051607">
    <property type="term" value="P:defense response to virus"/>
    <property type="evidence" value="ECO:0007669"/>
    <property type="project" value="Ensembl"/>
</dbReference>
<dbReference type="GO" id="GO:0006027">
    <property type="term" value="P:glycosaminoglycan catabolic process"/>
    <property type="evidence" value="ECO:0000314"/>
    <property type="project" value="UniProtKB"/>
</dbReference>
<dbReference type="GO" id="GO:0002244">
    <property type="term" value="P:hematopoietic progenitor cell differentiation"/>
    <property type="evidence" value="ECO:0007669"/>
    <property type="project" value="Ensembl"/>
</dbReference>
<dbReference type="GO" id="GO:0030214">
    <property type="term" value="P:hyaluronan catabolic process"/>
    <property type="evidence" value="ECO:0000314"/>
    <property type="project" value="UniProtKB"/>
</dbReference>
<dbReference type="GO" id="GO:0001822">
    <property type="term" value="P:kidney development"/>
    <property type="evidence" value="ECO:0000250"/>
    <property type="project" value="UniProtKB"/>
</dbReference>
<dbReference type="GO" id="GO:0042117">
    <property type="term" value="P:monocyte activation"/>
    <property type="evidence" value="ECO:0000314"/>
    <property type="project" value="UniProtKB"/>
</dbReference>
<dbReference type="GO" id="GO:0060586">
    <property type="term" value="P:multicellular organismal-level iron ion homeostasis"/>
    <property type="evidence" value="ECO:0007669"/>
    <property type="project" value="Ensembl"/>
</dbReference>
<dbReference type="GO" id="GO:0030308">
    <property type="term" value="P:negative regulation of cell growth"/>
    <property type="evidence" value="ECO:0000314"/>
    <property type="project" value="UniProtKB"/>
</dbReference>
<dbReference type="GO" id="GO:0010764">
    <property type="term" value="P:negative regulation of fibroblast migration"/>
    <property type="evidence" value="ECO:0000314"/>
    <property type="project" value="UniProtKB"/>
</dbReference>
<dbReference type="GO" id="GO:0051898">
    <property type="term" value="P:negative regulation of phosphatidylinositol 3-kinase/protein kinase B signal transduction"/>
    <property type="evidence" value="ECO:0000314"/>
    <property type="project" value="UniProtKB"/>
</dbReference>
<dbReference type="GO" id="GO:2001238">
    <property type="term" value="P:positive regulation of extrinsic apoptotic signaling pathway"/>
    <property type="evidence" value="ECO:0000250"/>
    <property type="project" value="BHF-UCL"/>
</dbReference>
<dbReference type="GO" id="GO:0050729">
    <property type="term" value="P:positive regulation of inflammatory response"/>
    <property type="evidence" value="ECO:0000314"/>
    <property type="project" value="UniProtKB"/>
</dbReference>
<dbReference type="GO" id="GO:0032755">
    <property type="term" value="P:positive regulation of interleukin-6 production"/>
    <property type="evidence" value="ECO:0000314"/>
    <property type="project" value="UniProtKB"/>
</dbReference>
<dbReference type="GO" id="GO:0032757">
    <property type="term" value="P:positive regulation of interleukin-8 production"/>
    <property type="evidence" value="ECO:0000314"/>
    <property type="project" value="UniProtKB"/>
</dbReference>
<dbReference type="GO" id="GO:0042307">
    <property type="term" value="P:positive regulation of protein import into nucleus"/>
    <property type="evidence" value="ECO:0000250"/>
    <property type="project" value="BHF-UCL"/>
</dbReference>
<dbReference type="GO" id="GO:0045944">
    <property type="term" value="P:positive regulation of transcription by RNA polymerase II"/>
    <property type="evidence" value="ECO:0000250"/>
    <property type="project" value="BHF-UCL"/>
</dbReference>
<dbReference type="GO" id="GO:0035810">
    <property type="term" value="P:positive regulation of urine volume"/>
    <property type="evidence" value="ECO:0000250"/>
    <property type="project" value="UniProtKB"/>
</dbReference>
<dbReference type="GO" id="GO:0070295">
    <property type="term" value="P:renal water absorption"/>
    <property type="evidence" value="ECO:0000250"/>
    <property type="project" value="UniProtKB"/>
</dbReference>
<dbReference type="GO" id="GO:0046677">
    <property type="term" value="P:response to antibiotic"/>
    <property type="evidence" value="ECO:0000270"/>
    <property type="project" value="UniProtKB"/>
</dbReference>
<dbReference type="GO" id="GO:0000302">
    <property type="term" value="P:response to reactive oxygen species"/>
    <property type="evidence" value="ECO:0000314"/>
    <property type="project" value="UniProtKB"/>
</dbReference>
<dbReference type="GO" id="GO:0009615">
    <property type="term" value="P:response to virus"/>
    <property type="evidence" value="ECO:0000314"/>
    <property type="project" value="UniProtKB"/>
</dbReference>
<dbReference type="GO" id="GO:0048705">
    <property type="term" value="P:skeletal system morphogenesis"/>
    <property type="evidence" value="ECO:0007669"/>
    <property type="project" value="Ensembl"/>
</dbReference>
<dbReference type="GO" id="GO:0046718">
    <property type="term" value="P:symbiont entry into host cell"/>
    <property type="evidence" value="ECO:0000250"/>
    <property type="project" value="UniProtKB"/>
</dbReference>
<dbReference type="FunFam" id="3.20.20.70:FF:000065">
    <property type="entry name" value="Hyaluronidase"/>
    <property type="match status" value="1"/>
</dbReference>
<dbReference type="Gene3D" id="3.20.20.70">
    <property type="entry name" value="Aldolase class I"/>
    <property type="match status" value="1"/>
</dbReference>
<dbReference type="InterPro" id="IPR013785">
    <property type="entry name" value="Aldolase_TIM"/>
</dbReference>
<dbReference type="InterPro" id="IPR017853">
    <property type="entry name" value="Glycoside_hydrolase_SF"/>
</dbReference>
<dbReference type="InterPro" id="IPR018155">
    <property type="entry name" value="Hyaluronidase"/>
</dbReference>
<dbReference type="PANTHER" id="PTHR11769">
    <property type="entry name" value="HYALURONIDASE"/>
    <property type="match status" value="1"/>
</dbReference>
<dbReference type="PANTHER" id="PTHR11769:SF6">
    <property type="entry name" value="HYALURONIDASE-2"/>
    <property type="match status" value="1"/>
</dbReference>
<dbReference type="Pfam" id="PF01630">
    <property type="entry name" value="Glyco_hydro_56"/>
    <property type="match status" value="1"/>
</dbReference>
<dbReference type="PIRSF" id="PIRSF038193">
    <property type="entry name" value="Hyaluronidase"/>
    <property type="match status" value="1"/>
</dbReference>
<dbReference type="PRINTS" id="PR00846">
    <property type="entry name" value="GLHYDRLASE56"/>
</dbReference>
<dbReference type="SUPFAM" id="SSF51445">
    <property type="entry name" value="(Trans)glycosidases"/>
    <property type="match status" value="1"/>
</dbReference>
<dbReference type="PROSITE" id="PS00022">
    <property type="entry name" value="EGF_1"/>
    <property type="match status" value="1"/>
</dbReference>
<dbReference type="PROSITE" id="PS01186">
    <property type="entry name" value="EGF_2"/>
    <property type="match status" value="1"/>
</dbReference>
<feature type="signal peptide" evidence="2">
    <location>
        <begin position="1"/>
        <end position="20"/>
    </location>
</feature>
<feature type="chain" id="PRO_0000012099" description="Hyaluronidase-2">
    <location>
        <begin position="21"/>
        <end position="448"/>
    </location>
</feature>
<feature type="propeptide" id="PRO_0000012100" description="Removed in mature form" evidence="2">
    <location>
        <begin position="449"/>
        <end position="473"/>
    </location>
</feature>
<feature type="domain" description="EGF-like">
    <location>
        <begin position="361"/>
        <end position="439"/>
    </location>
</feature>
<feature type="active site" description="Proton donor" evidence="1">
    <location>
        <position position="135"/>
    </location>
</feature>
<feature type="lipid moiety-binding region" description="GPI-anchor amidated glycine" evidence="2">
    <location>
        <position position="448"/>
    </location>
</feature>
<feature type="glycosylation site" description="N-linked (GlcNAc...) asparagine" evidence="2">
    <location>
        <position position="74"/>
    </location>
</feature>
<feature type="glycosylation site" description="N-linked (GlcNAc...) asparagine" evidence="2">
    <location>
        <position position="103"/>
    </location>
</feature>
<feature type="glycosylation site" description="N-linked (GlcNAc...) asparagine" evidence="2">
    <location>
        <position position="357"/>
    </location>
</feature>
<feature type="disulfide bond" evidence="1">
    <location>
        <begin position="47"/>
        <end position="340"/>
    </location>
</feature>
<feature type="disulfide bond" evidence="1">
    <location>
        <begin position="211"/>
        <end position="227"/>
    </location>
</feature>
<feature type="disulfide bond" evidence="1">
    <location>
        <begin position="365"/>
        <end position="376"/>
    </location>
</feature>
<feature type="disulfide bond" evidence="1">
    <location>
        <begin position="370"/>
        <end position="427"/>
    </location>
</feature>
<feature type="disulfide bond" evidence="1">
    <location>
        <begin position="429"/>
        <end position="438"/>
    </location>
</feature>
<feature type="sequence variant" id="VAR_028170" description="In dbSNP:rs709210." evidence="5 6 10 11 12">
    <original>S</original>
    <variation>A</variation>
    <location>
        <position position="18"/>
    </location>
</feature>
<feature type="sequence variant" id="VAR_090345" description="In MCCS; uncertain significance." evidence="9">
    <original>A</original>
    <variation>T</variation>
    <location>
        <position position="64"/>
    </location>
</feature>
<feature type="sequence variant" id="VAR_090346" description="In MCCS; pathogenic." evidence="9">
    <location>
        <begin position="65"/>
        <end position="473"/>
    </location>
</feature>
<feature type="sequence variant" id="VAR_090347" description="In MCCS; likely pathogenic." evidence="8 9">
    <original>K</original>
    <variation>R</variation>
    <location>
        <position position="148"/>
    </location>
</feature>
<feature type="sequence variant" id="VAR_090348" description="In MCCS; uncertain significance; decreased expression at the cell surface." evidence="9">
    <original>G</original>
    <variation>A</variation>
    <location>
        <position position="204"/>
    </location>
</feature>
<feature type="sequence variant" id="VAR_090349" description="In MCCS; uncertain significance; decreased expression at the cell surface." evidence="9">
    <original>L</original>
    <variation>R</variation>
    <location>
        <position position="238"/>
    </location>
</feature>
<feature type="sequence variant" id="VAR_090350" description="In MCCS; uncertain significance." evidence="7 8">
    <original>P</original>
    <variation>L</variation>
    <location>
        <position position="250"/>
    </location>
</feature>
<feature type="sequence variant" id="VAR_090351" description="In MCCS; uncertain significance; strongly decreased expression at the cell surface." evidence="9">
    <original>R</original>
    <variation>C</variation>
    <location>
        <position position="277"/>
    </location>
</feature>
<feature type="sequence variant" id="VAR_090352" description="In MCCS; likely pathogenic." evidence="9">
    <location>
        <begin position="295"/>
        <end position="473"/>
    </location>
</feature>
<feature type="sequence variant" id="VAR_090353" description="In MCCS; uncertain significance." evidence="9">
    <original>R</original>
    <variation>C</variation>
    <location>
        <position position="378"/>
    </location>
</feature>
<feature type="sequence variant" id="VAR_061193" description="In dbSNP:rs35455589.">
    <original>I</original>
    <variation>L</variation>
    <location>
        <position position="418"/>
    </location>
</feature>
<feature type="sequence variant" id="VAR_090354" description="In MCCS; likely pathogenic; strongly decreased expression at the cell surface." evidence="9">
    <original>F</original>
    <variation>V</variation>
    <location>
        <position position="425"/>
    </location>
</feature>
<feature type="sequence conflict" description="In Ref. 1; CAA03924." evidence="13" ref="1">
    <original>SR</original>
    <variation>AL</variation>
    <location>
        <begin position="261"/>
        <end position="262"/>
    </location>
</feature>
<feature type="sequence conflict" description="In Ref. 1; CAA03924." evidence="13" ref="1">
    <original>RL</original>
    <variation>C</variation>
    <location>
        <begin position="301"/>
        <end position="302"/>
    </location>
</feature>
<feature type="sequence conflict" description="In Ref. 1; CAA03924." evidence="13" ref="1">
    <location>
        <position position="375"/>
    </location>
</feature>
<feature type="sequence conflict" description="In Ref. 1; CAA03924." evidence="13" ref="1">
    <original>RR</original>
    <variation>PG</variation>
    <location>
        <begin position="378"/>
        <end position="379"/>
    </location>
</feature>
<feature type="sequence conflict" description="In Ref. 1; CAA03924." evidence="13" ref="1">
    <original>S</original>
    <variation>N</variation>
    <location>
        <position position="450"/>
    </location>
</feature>
<protein>
    <recommendedName>
        <fullName>Hyaluronidase-2</fullName>
        <shortName>Hyal-2</shortName>
        <ecNumber>3.2.1.35</ecNumber>
    </recommendedName>
    <alternativeName>
        <fullName>Hyaluronoglucosaminidase-2</fullName>
    </alternativeName>
    <alternativeName>
        <fullName>Lung carcinoma protein 2</fullName>
        <shortName>LuCa-2</shortName>
    </alternativeName>
</protein>
<organism>
    <name type="scientific">Homo sapiens</name>
    <name type="common">Human</name>
    <dbReference type="NCBI Taxonomy" id="9606"/>
    <lineage>
        <taxon>Eukaryota</taxon>
        <taxon>Metazoa</taxon>
        <taxon>Chordata</taxon>
        <taxon>Craniata</taxon>
        <taxon>Vertebrata</taxon>
        <taxon>Euteleostomi</taxon>
        <taxon>Mammalia</taxon>
        <taxon>Eutheria</taxon>
        <taxon>Euarchontoglires</taxon>
        <taxon>Primates</taxon>
        <taxon>Haplorrhini</taxon>
        <taxon>Catarrhini</taxon>
        <taxon>Hominidae</taxon>
        <taxon>Homo</taxon>
    </lineage>
</organism>
<proteinExistence type="evidence at protein level"/>
<name>HYAL2_HUMAN</name>
<keyword id="KW-1003">Cell membrane</keyword>
<keyword id="KW-0225">Disease variant</keyword>
<keyword id="KW-1015">Disulfide bond</keyword>
<keyword id="KW-0245">EGF-like domain</keyword>
<keyword id="KW-0325">Glycoprotein</keyword>
<keyword id="KW-0326">Glycosidase</keyword>
<keyword id="KW-0336">GPI-anchor</keyword>
<keyword id="KW-0378">Hydrolase</keyword>
<keyword id="KW-0449">Lipoprotein</keyword>
<keyword id="KW-0472">Membrane</keyword>
<keyword id="KW-1267">Proteomics identification</keyword>
<keyword id="KW-0675">Receptor</keyword>
<keyword id="KW-1185">Reference proteome</keyword>
<keyword id="KW-0732">Signal</keyword>
<reference key="1">
    <citation type="journal article" date="1998" name="J. Biol. Chem.">
        <title>HYAL2, a human gene expressed in many cells, encodes a lysosomal hyaluronidase with a novel type of specificity.</title>
        <authorList>
            <person name="Lepperdinger G."/>
            <person name="Strobl B."/>
            <person name="Kreil G."/>
        </authorList>
    </citation>
    <scope>NUCLEOTIDE SEQUENCE [MRNA]</scope>
    <scope>FUNCTION</scope>
    <scope>TISSUE SPECIFICITY</scope>
    <scope>VARIANT ALA-18</scope>
</reference>
<reference key="2">
    <citation type="submission" date="1998-10" db="EMBL/GenBank/DDBJ databases">
        <title>LUCA2 (HYAL2, lysosomal hyaluronidase) a novel human cDNA with homology to human PH-20 gene is homozygously deleted in small cell lung cancer and located in 3p21.3.</title>
        <authorList>
            <person name="Chen J."/>
            <person name="Bader S."/>
            <person name="Latif F."/>
            <person name="Duh F.-M."/>
            <person name="Lerman M.I."/>
            <person name="Minna J.D."/>
        </authorList>
    </citation>
    <scope>NUCLEOTIDE SEQUENCE [MRNA]</scope>
    <source>
        <tissue>Placenta</tissue>
    </source>
</reference>
<reference key="3">
    <citation type="journal article" date="2004" name="Nat. Genet.">
        <title>Complete sequencing and characterization of 21,243 full-length human cDNAs.</title>
        <authorList>
            <person name="Ota T."/>
            <person name="Suzuki Y."/>
            <person name="Nishikawa T."/>
            <person name="Otsuki T."/>
            <person name="Sugiyama T."/>
            <person name="Irie R."/>
            <person name="Wakamatsu A."/>
            <person name="Hayashi K."/>
            <person name="Sato H."/>
            <person name="Nagai K."/>
            <person name="Kimura K."/>
            <person name="Makita H."/>
            <person name="Sekine M."/>
            <person name="Obayashi M."/>
            <person name="Nishi T."/>
            <person name="Shibahara T."/>
            <person name="Tanaka T."/>
            <person name="Ishii S."/>
            <person name="Yamamoto J."/>
            <person name="Saito K."/>
            <person name="Kawai Y."/>
            <person name="Isono Y."/>
            <person name="Nakamura Y."/>
            <person name="Nagahari K."/>
            <person name="Murakami K."/>
            <person name="Yasuda T."/>
            <person name="Iwayanagi T."/>
            <person name="Wagatsuma M."/>
            <person name="Shiratori A."/>
            <person name="Sudo H."/>
            <person name="Hosoiri T."/>
            <person name="Kaku Y."/>
            <person name="Kodaira H."/>
            <person name="Kondo H."/>
            <person name="Sugawara M."/>
            <person name="Takahashi M."/>
            <person name="Kanda K."/>
            <person name="Yokoi T."/>
            <person name="Furuya T."/>
            <person name="Kikkawa E."/>
            <person name="Omura Y."/>
            <person name="Abe K."/>
            <person name="Kamihara K."/>
            <person name="Katsuta N."/>
            <person name="Sato K."/>
            <person name="Tanikawa M."/>
            <person name="Yamazaki M."/>
            <person name="Ninomiya K."/>
            <person name="Ishibashi T."/>
            <person name="Yamashita H."/>
            <person name="Murakawa K."/>
            <person name="Fujimori K."/>
            <person name="Tanai H."/>
            <person name="Kimata M."/>
            <person name="Watanabe M."/>
            <person name="Hiraoka S."/>
            <person name="Chiba Y."/>
            <person name="Ishida S."/>
            <person name="Ono Y."/>
            <person name="Takiguchi S."/>
            <person name="Watanabe S."/>
            <person name="Yosida M."/>
            <person name="Hotuta T."/>
            <person name="Kusano J."/>
            <person name="Kanehori K."/>
            <person name="Takahashi-Fujii A."/>
            <person name="Hara H."/>
            <person name="Tanase T.-O."/>
            <person name="Nomura Y."/>
            <person name="Togiya S."/>
            <person name="Komai F."/>
            <person name="Hara R."/>
            <person name="Takeuchi K."/>
            <person name="Arita M."/>
            <person name="Imose N."/>
            <person name="Musashino K."/>
            <person name="Yuuki H."/>
            <person name="Oshima A."/>
            <person name="Sasaki N."/>
            <person name="Aotsuka S."/>
            <person name="Yoshikawa Y."/>
            <person name="Matsunawa H."/>
            <person name="Ichihara T."/>
            <person name="Shiohata N."/>
            <person name="Sano S."/>
            <person name="Moriya S."/>
            <person name="Momiyama H."/>
            <person name="Satoh N."/>
            <person name="Takami S."/>
            <person name="Terashima Y."/>
            <person name="Suzuki O."/>
            <person name="Nakagawa S."/>
            <person name="Senoh A."/>
            <person name="Mizoguchi H."/>
            <person name="Goto Y."/>
            <person name="Shimizu F."/>
            <person name="Wakebe H."/>
            <person name="Hishigaki H."/>
            <person name="Watanabe T."/>
            <person name="Sugiyama A."/>
            <person name="Takemoto M."/>
            <person name="Kawakami B."/>
            <person name="Yamazaki M."/>
            <person name="Watanabe K."/>
            <person name="Kumagai A."/>
            <person name="Itakura S."/>
            <person name="Fukuzumi Y."/>
            <person name="Fujimori Y."/>
            <person name="Komiyama M."/>
            <person name="Tashiro H."/>
            <person name="Tanigami A."/>
            <person name="Fujiwara T."/>
            <person name="Ono T."/>
            <person name="Yamada K."/>
            <person name="Fujii Y."/>
            <person name="Ozaki K."/>
            <person name="Hirao M."/>
            <person name="Ohmori Y."/>
            <person name="Kawabata A."/>
            <person name="Hikiji T."/>
            <person name="Kobatake N."/>
            <person name="Inagaki H."/>
            <person name="Ikema Y."/>
            <person name="Okamoto S."/>
            <person name="Okitani R."/>
            <person name="Kawakami T."/>
            <person name="Noguchi S."/>
            <person name="Itoh T."/>
            <person name="Shigeta K."/>
            <person name="Senba T."/>
            <person name="Matsumura K."/>
            <person name="Nakajima Y."/>
            <person name="Mizuno T."/>
            <person name="Morinaga M."/>
            <person name="Sasaki M."/>
            <person name="Togashi T."/>
            <person name="Oyama M."/>
            <person name="Hata H."/>
            <person name="Watanabe M."/>
            <person name="Komatsu T."/>
            <person name="Mizushima-Sugano J."/>
            <person name="Satoh T."/>
            <person name="Shirai Y."/>
            <person name="Takahashi Y."/>
            <person name="Nakagawa K."/>
            <person name="Okumura K."/>
            <person name="Nagase T."/>
            <person name="Nomura N."/>
            <person name="Kikuchi H."/>
            <person name="Masuho Y."/>
            <person name="Yamashita R."/>
            <person name="Nakai K."/>
            <person name="Yada T."/>
            <person name="Nakamura Y."/>
            <person name="Ohara O."/>
            <person name="Isogai T."/>
            <person name="Sugano S."/>
        </authorList>
    </citation>
    <scope>NUCLEOTIDE SEQUENCE [LARGE SCALE MRNA]</scope>
    <scope>VARIANT ALA-18</scope>
    <source>
        <tissue>Placenta</tissue>
        <tissue>Synovium</tissue>
    </source>
</reference>
<reference key="4">
    <citation type="journal article" date="2006" name="Nature">
        <title>The DNA sequence, annotation and analysis of human chromosome 3.</title>
        <authorList>
            <person name="Muzny D.M."/>
            <person name="Scherer S.E."/>
            <person name="Kaul R."/>
            <person name="Wang J."/>
            <person name="Yu J."/>
            <person name="Sudbrak R."/>
            <person name="Buhay C.J."/>
            <person name="Chen R."/>
            <person name="Cree A."/>
            <person name="Ding Y."/>
            <person name="Dugan-Rocha S."/>
            <person name="Gill R."/>
            <person name="Gunaratne P."/>
            <person name="Harris R.A."/>
            <person name="Hawes A.C."/>
            <person name="Hernandez J."/>
            <person name="Hodgson A.V."/>
            <person name="Hume J."/>
            <person name="Jackson A."/>
            <person name="Khan Z.M."/>
            <person name="Kovar-Smith C."/>
            <person name="Lewis L.R."/>
            <person name="Lozado R.J."/>
            <person name="Metzker M.L."/>
            <person name="Milosavljevic A."/>
            <person name="Miner G.R."/>
            <person name="Morgan M.B."/>
            <person name="Nazareth L.V."/>
            <person name="Scott G."/>
            <person name="Sodergren E."/>
            <person name="Song X.-Z."/>
            <person name="Steffen D."/>
            <person name="Wei S."/>
            <person name="Wheeler D.A."/>
            <person name="Wright M.W."/>
            <person name="Worley K.C."/>
            <person name="Yuan Y."/>
            <person name="Zhang Z."/>
            <person name="Adams C.Q."/>
            <person name="Ansari-Lari M.A."/>
            <person name="Ayele M."/>
            <person name="Brown M.J."/>
            <person name="Chen G."/>
            <person name="Chen Z."/>
            <person name="Clendenning J."/>
            <person name="Clerc-Blankenburg K.P."/>
            <person name="Chen R."/>
            <person name="Chen Z."/>
            <person name="Davis C."/>
            <person name="Delgado O."/>
            <person name="Dinh H.H."/>
            <person name="Dong W."/>
            <person name="Draper H."/>
            <person name="Ernst S."/>
            <person name="Fu G."/>
            <person name="Gonzalez-Garay M.L."/>
            <person name="Garcia D.K."/>
            <person name="Gillett W."/>
            <person name="Gu J."/>
            <person name="Hao B."/>
            <person name="Haugen E."/>
            <person name="Havlak P."/>
            <person name="He X."/>
            <person name="Hennig S."/>
            <person name="Hu S."/>
            <person name="Huang W."/>
            <person name="Jackson L.R."/>
            <person name="Jacob L.S."/>
            <person name="Kelly S.H."/>
            <person name="Kube M."/>
            <person name="Levy R."/>
            <person name="Li Z."/>
            <person name="Liu B."/>
            <person name="Liu J."/>
            <person name="Liu W."/>
            <person name="Lu J."/>
            <person name="Maheshwari M."/>
            <person name="Nguyen B.-V."/>
            <person name="Okwuonu G.O."/>
            <person name="Palmeiri A."/>
            <person name="Pasternak S."/>
            <person name="Perez L.M."/>
            <person name="Phelps K.A."/>
            <person name="Plopper F.J."/>
            <person name="Qiang B."/>
            <person name="Raymond C."/>
            <person name="Rodriguez R."/>
            <person name="Saenphimmachak C."/>
            <person name="Santibanez J."/>
            <person name="Shen H."/>
            <person name="Shen Y."/>
            <person name="Subramanian S."/>
            <person name="Tabor P.E."/>
            <person name="Verduzco D."/>
            <person name="Waldron L."/>
            <person name="Wang J."/>
            <person name="Wang J."/>
            <person name="Wang Q."/>
            <person name="Williams G.A."/>
            <person name="Wong G.K.-S."/>
            <person name="Yao Z."/>
            <person name="Zhang J."/>
            <person name="Zhang X."/>
            <person name="Zhao G."/>
            <person name="Zhou J."/>
            <person name="Zhou Y."/>
            <person name="Nelson D."/>
            <person name="Lehrach H."/>
            <person name="Reinhardt R."/>
            <person name="Naylor S.L."/>
            <person name="Yang H."/>
            <person name="Olson M."/>
            <person name="Weinstock G."/>
            <person name="Gibbs R.A."/>
        </authorList>
    </citation>
    <scope>NUCLEOTIDE SEQUENCE [LARGE SCALE GENOMIC DNA]</scope>
</reference>
<reference key="5">
    <citation type="submission" date="2005-07" db="EMBL/GenBank/DDBJ databases">
        <authorList>
            <person name="Mural R.J."/>
            <person name="Istrail S."/>
            <person name="Sutton G."/>
            <person name="Florea L."/>
            <person name="Halpern A.L."/>
            <person name="Mobarry C.M."/>
            <person name="Lippert R."/>
            <person name="Walenz B."/>
            <person name="Shatkay H."/>
            <person name="Dew I."/>
            <person name="Miller J.R."/>
            <person name="Flanigan M.J."/>
            <person name="Edwards N.J."/>
            <person name="Bolanos R."/>
            <person name="Fasulo D."/>
            <person name="Halldorsson B.V."/>
            <person name="Hannenhalli S."/>
            <person name="Turner R."/>
            <person name="Yooseph S."/>
            <person name="Lu F."/>
            <person name="Nusskern D.R."/>
            <person name="Shue B.C."/>
            <person name="Zheng X.H."/>
            <person name="Zhong F."/>
            <person name="Delcher A.L."/>
            <person name="Huson D.H."/>
            <person name="Kravitz S.A."/>
            <person name="Mouchard L."/>
            <person name="Reinert K."/>
            <person name="Remington K.A."/>
            <person name="Clark A.G."/>
            <person name="Waterman M.S."/>
            <person name="Eichler E.E."/>
            <person name="Adams M.D."/>
            <person name="Hunkapiller M.W."/>
            <person name="Myers E.W."/>
            <person name="Venter J.C."/>
        </authorList>
    </citation>
    <scope>NUCLEOTIDE SEQUENCE [LARGE SCALE GENOMIC DNA]</scope>
    <scope>VARIANT ALA-18</scope>
</reference>
<reference key="6">
    <citation type="journal article" date="2004" name="Genome Res.">
        <title>The status, quality, and expansion of the NIH full-length cDNA project: the Mammalian Gene Collection (MGC).</title>
        <authorList>
            <consortium name="The MGC Project Team"/>
        </authorList>
    </citation>
    <scope>NUCLEOTIDE SEQUENCE [LARGE SCALE MRNA]</scope>
    <scope>VARIANT ALA-18</scope>
    <source>
        <tissue>Kidney</tissue>
    </source>
</reference>
<reference key="7">
    <citation type="submission" date="1998-06" db="EMBL/GenBank/DDBJ databases">
        <authorList>
            <person name="Yu W."/>
            <person name="Gibbs R.A."/>
        </authorList>
    </citation>
    <scope>NUCLEOTIDE SEQUENCE [LARGE SCALE MRNA] OF 15-473</scope>
    <scope>VARIANT ALA-18</scope>
    <source>
        <tissue>Brain</tissue>
    </source>
</reference>
<reference key="8">
    <citation type="journal article" date="2001" name="Matrix Biol.">
        <title>Hyal2 -- less active, but more versatile?</title>
        <authorList>
            <person name="Lepperdinger G."/>
            <person name="Mullegger J."/>
            <person name="Kreil G."/>
        </authorList>
    </citation>
    <scope>REVIEW</scope>
</reference>
<reference key="9">
    <citation type="journal article" date="2001" name="Proc. Natl. Acad. Sci. U.S.A.">
        <title>Candidate tumor suppressor HYAL2 is a glycosylphosphatidylinositol (GPI)-anchored cell-surface receptor for jaagsiekte sheep retrovirus, the envelope protein of which mediates oncogenic transformation.</title>
        <authorList>
            <person name="Rai S.K."/>
            <person name="Duh F.-M."/>
            <person name="Vigdorovich V."/>
            <person name="Danilkovitch-Miagkova A."/>
            <person name="Lerman M.I."/>
            <person name="Miller A.D."/>
        </authorList>
    </citation>
    <scope>SUBCELLULAR LOCATION</scope>
</reference>
<reference key="10">
    <citation type="journal article" date="2003" name="Proc. Natl. Acad. Sci. U.S.A.">
        <title>Hyaluronidase 2 negatively regulates RON receptor tyrosine kinase and mediates transformation of epithelial cells by jaagsiekte sheep retrovirus.</title>
        <authorList>
            <person name="Danilkovitch-Miagkova A."/>
            <person name="Duh F.-M."/>
            <person name="Kuzmin I."/>
            <person name="Angeloni D."/>
            <person name="Liu S.-L."/>
            <person name="Miller A.D."/>
            <person name="Lerman M.I."/>
        </authorList>
    </citation>
    <scope>INTERACTION WITH MST1R</scope>
</reference>
<reference key="11">
    <citation type="journal article" date="2016" name="Genet. Med.">
        <title>Accelerating matchmaking of novel dysmorphology syndromes through clinical and genomic characterization of a large cohort.</title>
        <authorList>
            <person name="Shaheen R."/>
            <person name="Patel N."/>
            <person name="Shamseldin H."/>
            <person name="Alzahrani F."/>
            <person name="Al-Yamany R."/>
            <person name="Almoisheer A."/>
            <person name="Ewida N."/>
            <person name="Anazi S."/>
            <person name="Alnemer M."/>
            <person name="Elsheikh M."/>
            <person name="Alfaleh K."/>
            <person name="Alshammari M."/>
            <person name="Alhashem A."/>
            <person name="Alangari A.A."/>
            <person name="Salih M.A."/>
            <person name="Kircher M."/>
            <person name="Daza R.M."/>
            <person name="Ibrahim N."/>
            <person name="Wakil S.M."/>
            <person name="Alaqeel A."/>
            <person name="Altowaijri I."/>
            <person name="Shendure J."/>
            <person name="Al-Habib A."/>
            <person name="Faqieh E."/>
            <person name="Alkuraya F.S."/>
        </authorList>
    </citation>
    <scope>INVOLVEMENT IN MCCS</scope>
    <scope>VARIANT MCCS LEU-250</scope>
</reference>
<reference key="12">
    <citation type="journal article" date="2017" name="PLoS Genet.">
        <title>Mutations in HYAL2, Encoding Hyaluronidase 2, Cause a Syndrome of Orofacial Clefting and Cor Triatriatum Sinister in Humans and Mice.</title>
        <authorList>
            <person name="Muggenthaler M.M."/>
            <person name="Chowdhury B."/>
            <person name="Hasan S.N."/>
            <person name="Cross H.E."/>
            <person name="Mark B."/>
            <person name="Harlalka G.V."/>
            <person name="Patton M.A."/>
            <person name="Ishida M."/>
            <person name="Behr E.R."/>
            <person name="Sharma S."/>
            <person name="Zahka K."/>
            <person name="Faqeih E."/>
            <person name="Blakley B."/>
            <person name="Jackson M."/>
            <person name="Lees M."/>
            <person name="Dolinsky V."/>
            <person name="Cross L."/>
            <person name="Stanier P."/>
            <person name="Salter C."/>
            <person name="Baple E.L."/>
            <person name="Alkuraya F.S."/>
            <person name="Crosby A.H."/>
            <person name="Triggs-Raine B."/>
            <person name="Chioza B.A."/>
        </authorList>
    </citation>
    <scope>INVOLVEMENT IN MCCS</scope>
    <scope>VARIANTS MCCS ARG-148 AND LEU-250</scope>
</reference>
<reference key="13">
    <citation type="journal article" date="2022" name="Genet. Med.">
        <title>Elucidating the clinical spectrum and molecular basis of HYAL2 deficiency.</title>
        <authorList>
            <person name="Fasham J."/>
            <person name="Lin S."/>
            <person name="Ghosh P."/>
            <person name="Radio F.C."/>
            <person name="Farrow E.G."/>
            <person name="Thiffault I."/>
            <person name="Kussman J."/>
            <person name="Zhou D."/>
            <person name="Hemming R."/>
            <person name="Zahka K."/>
            <person name="Chioza B.A."/>
            <person name="Rawlins L.E."/>
            <person name="Wenger O.K."/>
            <person name="Gunning A.C."/>
            <person name="Pizzi S."/>
            <person name="Onesimo R."/>
            <person name="Zampino G."/>
            <person name="Barker E."/>
            <person name="Osawa N."/>
            <person name="Rodriguez M.C."/>
            <person name="Neuhann T.M."/>
            <person name="Zackai E.H."/>
            <person name="Keena B."/>
            <person name="Capasso J."/>
            <person name="Levin A.V."/>
            <person name="Bhoj E."/>
            <person name="Li D."/>
            <person name="Hakonarson H."/>
            <person name="Wentzensen I.M."/>
            <person name="Jackson A."/>
            <person name="Chandler K.E."/>
            <person name="Coban-Akdemir Z.H."/>
            <person name="Posey J.E."/>
            <person name="Banka S."/>
            <person name="Lupski J.R."/>
            <person name="Sheppard S.E."/>
            <person name="Tartaglia M."/>
            <person name="Triggs-Raine B."/>
            <person name="Crosby A.H."/>
            <person name="Baple E.L."/>
        </authorList>
    </citation>
    <scope>INVOLVEMENT IN MCCS</scope>
    <scope>VARIANTS MCCS THR-64; 65-SER--LEU-473 DEL; ARG-148; ALA-204; ARG-238; CYS-277; 295-ARG--LEU-473 DEL; CYS-378 AND VAL-425</scope>
    <scope>CHARACTERIZATION OF VARIANTS MCCS ALA-204; ARG-238; CYS-277 AND VAL-425</scope>
    <scope>SUBCELLULAR LOCATION</scope>
</reference>
<accession>Q12891</accession>
<accession>B3KRZ2</accession>
<accession>O15177</accession>
<accession>Q9BW29</accession>
<gene>
    <name type="primary">HYAL2</name>
    <name type="synonym">LUCA2</name>
</gene>
<comment type="function">
    <text evidence="8 10">Catalyzes hyaluronan degradation into small fragments that are endocytosed and degraded in lysosomes by HYAL1 and exoglycosidases (PubMed:9712871). Essential for the breakdown of extracellular matrix hyaluronan (PubMed:28081210).</text>
</comment>
<comment type="catalytic activity">
    <reaction>
        <text>Random hydrolysis of (1-&gt;4)-linkages between N-acetyl-beta-D-glucosamine and D-glucuronate residues in hyaluronate.</text>
        <dbReference type="EC" id="3.2.1.35"/>
    </reaction>
</comment>
<comment type="subunit">
    <text evidence="4">Interacts with MST1R.</text>
</comment>
<comment type="interaction">
    <interactant intactId="EBI-2806068">
        <id>Q12891</id>
    </interactant>
    <interactant intactId="EBI-17264467">
        <id>P05067-2</id>
        <label>APP</label>
    </interactant>
    <organismsDiffer>false</organismsDiffer>
    <experiments>3</experiments>
</comment>
<comment type="interaction">
    <interactant intactId="EBI-2806068">
        <id>Q12891</id>
    </interactant>
    <interactant intactId="EBI-702390">
        <id>Q9UBB4</id>
        <label>ATXN10</label>
    </interactant>
    <organismsDiffer>false</organismsDiffer>
    <experiments>3</experiments>
</comment>
<comment type="interaction">
    <interactant intactId="EBI-2806068">
        <id>Q12891</id>
    </interactant>
    <interactant intactId="EBI-3867333">
        <id>A8MQ03</id>
        <label>CYSRT1</label>
    </interactant>
    <organismsDiffer>false</organismsDiffer>
    <experiments>3</experiments>
</comment>
<comment type="interaction">
    <interactant intactId="EBI-2806068">
        <id>Q12891</id>
    </interactant>
    <interactant intactId="EBI-741101">
        <id>Q13643</id>
        <label>FHL3</label>
    </interactant>
    <organismsDiffer>false</organismsDiffer>
    <experiments>3</experiments>
</comment>
<comment type="interaction">
    <interactant intactId="EBI-2806068">
        <id>Q12891</id>
    </interactant>
    <interactant intactId="EBI-744302">
        <id>P14136</id>
        <label>GFAP</label>
    </interactant>
    <organismsDiffer>false</organismsDiffer>
    <experiments>3</experiments>
</comment>
<comment type="interaction">
    <interactant intactId="EBI-2806068">
        <id>Q12891</id>
    </interactant>
    <interactant intactId="EBI-466029">
        <id>P42858</id>
        <label>HTT</label>
    </interactant>
    <organismsDiffer>false</organismsDiffer>
    <experiments>9</experiments>
</comment>
<comment type="interaction">
    <interactant intactId="EBI-2806068">
        <id>Q12891</id>
    </interactant>
    <interactant intactId="EBI-948001">
        <id>Q15323</id>
        <label>KRT31</label>
    </interactant>
    <organismsDiffer>false</organismsDiffer>
    <experiments>3</experiments>
</comment>
<comment type="interaction">
    <interactant intactId="EBI-2806068">
        <id>Q12891</id>
    </interactant>
    <interactant intactId="EBI-1047093">
        <id>O76011</id>
        <label>KRT34</label>
    </interactant>
    <organismsDiffer>false</organismsDiffer>
    <experiments>3</experiments>
</comment>
<comment type="interaction">
    <interactant intactId="EBI-2806068">
        <id>Q12891</id>
    </interactant>
    <interactant intactId="EBI-11959885">
        <id>Q07627</id>
        <label>KRTAP1-1</label>
    </interactant>
    <organismsDiffer>false</organismsDiffer>
    <experiments>3</experiments>
</comment>
<comment type="interaction">
    <interactant intactId="EBI-2806068">
        <id>Q12891</id>
    </interactant>
    <interactant intactId="EBI-751260">
        <id>Q9BYR7</id>
        <label>KRTAP3-2</label>
    </interactant>
    <organismsDiffer>false</organismsDiffer>
    <experiments>3</experiments>
</comment>
<comment type="interaction">
    <interactant intactId="EBI-2806068">
        <id>Q12891</id>
    </interactant>
    <interactant intactId="EBI-11962084">
        <id>Q3LI66</id>
        <label>KRTAP6-2</label>
    </interactant>
    <organismsDiffer>false</organismsDiffer>
    <experiments>3</experiments>
</comment>
<comment type="interaction">
    <interactant intactId="EBI-2806068">
        <id>Q12891</id>
    </interactant>
    <interactant intactId="EBI-22311199">
        <id>Q3LI67</id>
        <label>KRTAP6-3</label>
    </interactant>
    <organismsDiffer>false</organismsDiffer>
    <experiments>3</experiments>
</comment>
<comment type="interaction">
    <interactant intactId="EBI-2806068">
        <id>Q12891</id>
    </interactant>
    <interactant intactId="EBI-1391623">
        <id>P29474</id>
        <label>NOS3</label>
    </interactant>
    <organismsDiffer>false</organismsDiffer>
    <experiments>3</experiments>
</comment>
<comment type="interaction">
    <interactant intactId="EBI-2806068">
        <id>Q12891</id>
    </interactant>
    <interactant intactId="EBI-448407">
        <id>Q9HAT8</id>
        <label>PELI2</label>
    </interactant>
    <organismsDiffer>false</organismsDiffer>
    <experiments>3</experiments>
</comment>
<comment type="interaction">
    <interactant intactId="EBI-2806068">
        <id>Q12891</id>
    </interactant>
    <interactant intactId="EBI-3909798">
        <id>Q15165</id>
        <label>PON2</label>
    </interactant>
    <organismsDiffer>false</organismsDiffer>
    <experiments>2</experiments>
</comment>
<comment type="interaction">
    <interactant intactId="EBI-2806068">
        <id>Q12891</id>
    </interactant>
    <interactant intactId="EBI-11047108">
        <id>P49768-2</id>
        <label>PSEN1</label>
    </interactant>
    <organismsDiffer>false</organismsDiffer>
    <experiments>3</experiments>
</comment>
<comment type="subcellular location">
    <subcellularLocation>
        <location evidence="3 9">Cell membrane</location>
        <topology evidence="3">Lipid-anchor</topology>
        <topology evidence="3">GPI-anchor</topology>
    </subcellularLocation>
</comment>
<comment type="tissue specificity">
    <text evidence="10">Widely expressed (at protein level).</text>
</comment>
<comment type="disease" evidence="7 8 9">
    <disease id="DI-06986">
        <name>Muggenthaler-Chowdhury-Chioza syndrome</name>
        <acronym>MCCS</acronym>
        <description>An autosomal recessive disorder characterized by distinctive craniofacial dysmorphism with frontal bossing, hypertelorism, a broad and flattened nasal tip, and cupped ears with superior helices. Other common but variable clinical manifestations are unilateral or bilateral cleft lip and palate, congenital cardiac anomalies, ocular features including mild to severe myopia and cataracts, single palmar crease, and pectus excavatum.</description>
        <dbReference type="MIM" id="621063"/>
    </disease>
    <text>The disease is caused by variants affecting the gene represented in this entry.</text>
</comment>
<comment type="similarity">
    <text evidence="13">Belongs to the glycosyl hydrolase 56 family.</text>
</comment>
<comment type="sequence caution" evidence="13">
    <conflict type="erroneous initiation">
        <sequence resource="EMBL-CDS" id="AAC28656"/>
    </conflict>
    <text>Truncated N-terminus.</text>
</comment>
<comment type="online information" name="Atlas of Genetics and Cytogenetics in Oncology and Haematology">
    <link uri="https://atlasgeneticsoncology.org/gene/40904/HYAL2"/>
</comment>
<sequence length="473" mass="53860">MRAGPGPTVTLALVLAVSWAMELKPTAPPIFTGRPFVVAWDVPTQDCGPRLKVPLDLNAFDVQASPNEGFVNQNITIFYRDRLGLYPRFDSAGRSVHGGVPQNVSLWAHRKMLQKRVEHYIRTQESAGLAVIDWEDWRPVWVRNWQDKDVYRRLSRQLVASRHPDWPPDRIVKQAQYEFEFAAQQFMLETLRYVKAVRPRHLWGFYLFPDCYNHDYVQNWESYTGRCPDVEVARNDQLAWLWAESTALFPSVYLDETLASSRHGRNFVSFRVQEALRVARTHHANHALPVYVFTRPTYSRRLTGLSEMDLISTIGESAALGAAGVILWGDAGYTTSTETCQYLKDYLTRLLVPYVVNVSWATQYCSRAQCHGHGRCVRRNPSASTFLHLSTNSFRLVPGHAPGEPQLRPVGELSWADIDHLQTHFRCQCYLGWSGEQCQWDHRQAAGGASEAWAGSHLTSLLALAALAFTWTL</sequence>